<name>TCPQ_ARATH</name>
<organism evidence="11">
    <name type="scientific">Arabidopsis thaliana</name>
    <name type="common">Mouse-ear cress</name>
    <dbReference type="NCBI Taxonomy" id="3702"/>
    <lineage>
        <taxon>Eukaryota</taxon>
        <taxon>Viridiplantae</taxon>
        <taxon>Streptophyta</taxon>
        <taxon>Embryophyta</taxon>
        <taxon>Tracheophyta</taxon>
        <taxon>Spermatophyta</taxon>
        <taxon>Magnoliopsida</taxon>
        <taxon>eudicotyledons</taxon>
        <taxon>Gunneridae</taxon>
        <taxon>Pentapetalae</taxon>
        <taxon>rosids</taxon>
        <taxon>malvids</taxon>
        <taxon>Brassicales</taxon>
        <taxon>Brassicaceae</taxon>
        <taxon>Camelineae</taxon>
        <taxon>Arabidopsis</taxon>
    </lineage>
</organism>
<dbReference type="EMBL" id="AC011698">
    <property type="protein sequence ID" value="AAF05855.1"/>
    <property type="status" value="ALT_SEQ"/>
    <property type="molecule type" value="Genomic_DNA"/>
</dbReference>
<dbReference type="EMBL" id="CP002686">
    <property type="protein sequence ID" value="AEE74018.1"/>
    <property type="molecule type" value="Genomic_DNA"/>
</dbReference>
<dbReference type="EMBL" id="AF370490">
    <property type="protein sequence ID" value="AAK43867.1"/>
    <property type="molecule type" value="mRNA"/>
</dbReference>
<dbReference type="EMBL" id="BT010388">
    <property type="protein sequence ID" value="AAQ56831.1"/>
    <property type="molecule type" value="mRNA"/>
</dbReference>
<dbReference type="RefSeq" id="NP_566219.1">
    <property type="nucleotide sequence ID" value="NM_111267.5"/>
</dbReference>
<dbReference type="SMR" id="Q94K05"/>
<dbReference type="FunCoup" id="Q94K05">
    <property type="interactions" value="4801"/>
</dbReference>
<dbReference type="IntAct" id="Q94K05">
    <property type="interactions" value="7"/>
</dbReference>
<dbReference type="STRING" id="3702.Q94K05"/>
<dbReference type="iPTMnet" id="Q94K05"/>
<dbReference type="MetOSite" id="Q94K05"/>
<dbReference type="PaxDb" id="3702-AT3G03960.1"/>
<dbReference type="ProteomicsDB" id="234225"/>
<dbReference type="EnsemblPlants" id="AT3G03960.1">
    <property type="protein sequence ID" value="AT3G03960.1"/>
    <property type="gene ID" value="AT3G03960"/>
</dbReference>
<dbReference type="GeneID" id="819549"/>
<dbReference type="Gramene" id="AT3G03960.1">
    <property type="protein sequence ID" value="AT3G03960.1"/>
    <property type="gene ID" value="AT3G03960"/>
</dbReference>
<dbReference type="KEGG" id="ath:AT3G03960"/>
<dbReference type="Araport" id="AT3G03960"/>
<dbReference type="TAIR" id="AT3G03960"/>
<dbReference type="eggNOG" id="KOG0362">
    <property type="taxonomic scope" value="Eukaryota"/>
</dbReference>
<dbReference type="HOGENOM" id="CLU_008891_4_2_1"/>
<dbReference type="InParanoid" id="Q94K05"/>
<dbReference type="OMA" id="WGLKYAV"/>
<dbReference type="OrthoDB" id="1748577at2759"/>
<dbReference type="PhylomeDB" id="Q94K05"/>
<dbReference type="BRENDA" id="3.6.4.B10">
    <property type="organism ID" value="399"/>
</dbReference>
<dbReference type="PRO" id="PR:Q94K05"/>
<dbReference type="Proteomes" id="UP000006548">
    <property type="component" value="Chromosome 3"/>
</dbReference>
<dbReference type="ExpressionAtlas" id="Q94K05">
    <property type="expression patterns" value="baseline and differential"/>
</dbReference>
<dbReference type="GO" id="GO:0005737">
    <property type="term" value="C:cytoplasm"/>
    <property type="evidence" value="ECO:0000314"/>
    <property type="project" value="UniProtKB"/>
</dbReference>
<dbReference type="GO" id="GO:0005829">
    <property type="term" value="C:cytosol"/>
    <property type="evidence" value="ECO:0007005"/>
    <property type="project" value="TAIR"/>
</dbReference>
<dbReference type="GO" id="GO:0009506">
    <property type="term" value="C:plasmodesma"/>
    <property type="evidence" value="ECO:0007005"/>
    <property type="project" value="TAIR"/>
</dbReference>
<dbReference type="GO" id="GO:0005524">
    <property type="term" value="F:ATP binding"/>
    <property type="evidence" value="ECO:0007669"/>
    <property type="project" value="UniProtKB-KW"/>
</dbReference>
<dbReference type="GO" id="GO:0016887">
    <property type="term" value="F:ATP hydrolysis activity"/>
    <property type="evidence" value="ECO:0007669"/>
    <property type="project" value="InterPro"/>
</dbReference>
<dbReference type="GO" id="GO:0140662">
    <property type="term" value="F:ATP-dependent protein folding chaperone"/>
    <property type="evidence" value="ECO:0007669"/>
    <property type="project" value="InterPro"/>
</dbReference>
<dbReference type="GO" id="GO:0044183">
    <property type="term" value="F:protein folding chaperone"/>
    <property type="evidence" value="ECO:0000314"/>
    <property type="project" value="UniProtKB"/>
</dbReference>
<dbReference type="GO" id="GO:0051082">
    <property type="term" value="F:unfolded protein binding"/>
    <property type="evidence" value="ECO:0007669"/>
    <property type="project" value="InterPro"/>
</dbReference>
<dbReference type="GO" id="GO:0051050">
    <property type="term" value="P:positive regulation of transport"/>
    <property type="evidence" value="ECO:0000315"/>
    <property type="project" value="UniProtKB"/>
</dbReference>
<dbReference type="GO" id="GO:0006457">
    <property type="term" value="P:protein folding"/>
    <property type="evidence" value="ECO:0000304"/>
    <property type="project" value="UniProtKB"/>
</dbReference>
<dbReference type="CDD" id="cd03341">
    <property type="entry name" value="TCP1_theta"/>
    <property type="match status" value="1"/>
</dbReference>
<dbReference type="FunFam" id="3.50.7.10:FF:000008">
    <property type="entry name" value="T-complex protein 1 subunit theta"/>
    <property type="match status" value="1"/>
</dbReference>
<dbReference type="Gene3D" id="3.50.7.10">
    <property type="entry name" value="GroEL"/>
    <property type="match status" value="1"/>
</dbReference>
<dbReference type="Gene3D" id="1.10.560.10">
    <property type="entry name" value="GroEL-like equatorial domain"/>
    <property type="match status" value="1"/>
</dbReference>
<dbReference type="Gene3D" id="3.30.260.10">
    <property type="entry name" value="TCP-1-like chaperonin intermediate domain"/>
    <property type="match status" value="1"/>
</dbReference>
<dbReference type="InterPro" id="IPR012721">
    <property type="entry name" value="Chap_CCT_theta"/>
</dbReference>
<dbReference type="InterPro" id="IPR017998">
    <property type="entry name" value="Chaperone_TCP-1"/>
</dbReference>
<dbReference type="InterPro" id="IPR002194">
    <property type="entry name" value="Chaperonin_TCP-1_CS"/>
</dbReference>
<dbReference type="InterPro" id="IPR002423">
    <property type="entry name" value="Cpn60/GroEL/TCP-1"/>
</dbReference>
<dbReference type="InterPro" id="IPR027409">
    <property type="entry name" value="GroEL-like_apical_dom_sf"/>
</dbReference>
<dbReference type="InterPro" id="IPR027413">
    <property type="entry name" value="GROEL-like_equatorial_sf"/>
</dbReference>
<dbReference type="InterPro" id="IPR027410">
    <property type="entry name" value="TCP-1-like_intermed_sf"/>
</dbReference>
<dbReference type="NCBIfam" id="TIGR02346">
    <property type="entry name" value="chap_CCT_theta"/>
    <property type="match status" value="1"/>
</dbReference>
<dbReference type="PANTHER" id="PTHR11353">
    <property type="entry name" value="CHAPERONIN"/>
    <property type="match status" value="1"/>
</dbReference>
<dbReference type="Pfam" id="PF00118">
    <property type="entry name" value="Cpn60_TCP1"/>
    <property type="match status" value="1"/>
</dbReference>
<dbReference type="PRINTS" id="PR00304">
    <property type="entry name" value="TCOMPLEXTCP1"/>
</dbReference>
<dbReference type="SUPFAM" id="SSF52029">
    <property type="entry name" value="GroEL apical domain-like"/>
    <property type="match status" value="1"/>
</dbReference>
<dbReference type="SUPFAM" id="SSF48592">
    <property type="entry name" value="GroEL equatorial domain-like"/>
    <property type="match status" value="1"/>
</dbReference>
<dbReference type="SUPFAM" id="SSF54849">
    <property type="entry name" value="GroEL-intermediate domain like"/>
    <property type="match status" value="1"/>
</dbReference>
<dbReference type="PROSITE" id="PS00750">
    <property type="entry name" value="TCP1_1"/>
    <property type="match status" value="1"/>
</dbReference>
<dbReference type="PROSITE" id="PS00751">
    <property type="entry name" value="TCP1_2"/>
    <property type="match status" value="1"/>
</dbReference>
<evidence type="ECO:0000255" key="1">
    <source>
        <dbReference type="RuleBase" id="RU004187"/>
    </source>
</evidence>
<evidence type="ECO:0000269" key="2">
    <source>
    </source>
</evidence>
<evidence type="ECO:0000303" key="3">
    <source>
    </source>
</evidence>
<evidence type="ECO:0000303" key="4">
    <source>
    </source>
</evidence>
<evidence type="ECO:0000305" key="5"/>
<evidence type="ECO:0000305" key="6">
    <source>
    </source>
</evidence>
<evidence type="ECO:0000305" key="7">
    <source>
    </source>
</evidence>
<evidence type="ECO:0000305" key="8">
    <source>
    </source>
</evidence>
<evidence type="ECO:0000312" key="9">
    <source>
        <dbReference type="Araport" id="AT3G03960"/>
    </source>
</evidence>
<evidence type="ECO:0000312" key="10">
    <source>
        <dbReference type="EMBL" id="AAF05855.1"/>
    </source>
</evidence>
<evidence type="ECO:0000312" key="11">
    <source>
        <dbReference type="EMBL" id="AAK43867.1"/>
    </source>
</evidence>
<evidence type="ECO:0000312" key="12">
    <source>
        <dbReference type="Proteomes" id="UP000006548"/>
    </source>
</evidence>
<proteinExistence type="evidence at protein level"/>
<keyword id="KW-0067">ATP-binding</keyword>
<keyword id="KW-0143">Chaperone</keyword>
<keyword id="KW-0963">Cytoplasm</keyword>
<keyword id="KW-0547">Nucleotide-binding</keyword>
<keyword id="KW-1185">Reference proteome</keyword>
<reference key="1">
    <citation type="journal article" date="2000" name="Nature">
        <title>Sequence and analysis of chromosome 3 of the plant Arabidopsis thaliana.</title>
        <authorList>
            <person name="Salanoubat M."/>
            <person name="Lemcke K."/>
            <person name="Rieger M."/>
            <person name="Ansorge W."/>
            <person name="Unseld M."/>
            <person name="Fartmann B."/>
            <person name="Valle G."/>
            <person name="Bloecker H."/>
            <person name="Perez-Alonso M."/>
            <person name="Obermaier B."/>
            <person name="Delseny M."/>
            <person name="Boutry M."/>
            <person name="Grivell L.A."/>
            <person name="Mache R."/>
            <person name="Puigdomenech P."/>
            <person name="De Simone V."/>
            <person name="Choisne N."/>
            <person name="Artiguenave F."/>
            <person name="Robert C."/>
            <person name="Brottier P."/>
            <person name="Wincker P."/>
            <person name="Cattolico L."/>
            <person name="Weissenbach J."/>
            <person name="Saurin W."/>
            <person name="Quetier F."/>
            <person name="Schaefer M."/>
            <person name="Mueller-Auer S."/>
            <person name="Gabel C."/>
            <person name="Fuchs M."/>
            <person name="Benes V."/>
            <person name="Wurmbach E."/>
            <person name="Drzonek H."/>
            <person name="Erfle H."/>
            <person name="Jordan N."/>
            <person name="Bangert S."/>
            <person name="Wiedelmann R."/>
            <person name="Kranz H."/>
            <person name="Voss H."/>
            <person name="Holland R."/>
            <person name="Brandt P."/>
            <person name="Nyakatura G."/>
            <person name="Vezzi A."/>
            <person name="D'Angelo M."/>
            <person name="Pallavicini A."/>
            <person name="Toppo S."/>
            <person name="Simionati B."/>
            <person name="Conrad A."/>
            <person name="Hornischer K."/>
            <person name="Kauer G."/>
            <person name="Loehnert T.-H."/>
            <person name="Nordsiek G."/>
            <person name="Reichelt J."/>
            <person name="Scharfe M."/>
            <person name="Schoen O."/>
            <person name="Bargues M."/>
            <person name="Terol J."/>
            <person name="Climent J."/>
            <person name="Navarro P."/>
            <person name="Collado C."/>
            <person name="Perez-Perez A."/>
            <person name="Ottenwaelder B."/>
            <person name="Duchemin D."/>
            <person name="Cooke R."/>
            <person name="Laudie M."/>
            <person name="Berger-Llauro C."/>
            <person name="Purnelle B."/>
            <person name="Masuy D."/>
            <person name="de Haan M."/>
            <person name="Maarse A.C."/>
            <person name="Alcaraz J.-P."/>
            <person name="Cottet A."/>
            <person name="Casacuberta E."/>
            <person name="Monfort A."/>
            <person name="Argiriou A."/>
            <person name="Flores M."/>
            <person name="Liguori R."/>
            <person name="Vitale D."/>
            <person name="Mannhaupt G."/>
            <person name="Haase D."/>
            <person name="Schoof H."/>
            <person name="Rudd S."/>
            <person name="Zaccaria P."/>
            <person name="Mewes H.-W."/>
            <person name="Mayer K.F.X."/>
            <person name="Kaul S."/>
            <person name="Town C.D."/>
            <person name="Koo H.L."/>
            <person name="Tallon L.J."/>
            <person name="Jenkins J."/>
            <person name="Rooney T."/>
            <person name="Rizzo M."/>
            <person name="Walts A."/>
            <person name="Utterback T."/>
            <person name="Fujii C.Y."/>
            <person name="Shea T.P."/>
            <person name="Creasy T.H."/>
            <person name="Haas B."/>
            <person name="Maiti R."/>
            <person name="Wu D."/>
            <person name="Peterson J."/>
            <person name="Van Aken S."/>
            <person name="Pai G."/>
            <person name="Militscher J."/>
            <person name="Sellers P."/>
            <person name="Gill J.E."/>
            <person name="Feldblyum T.V."/>
            <person name="Preuss D."/>
            <person name="Lin X."/>
            <person name="Nierman W.C."/>
            <person name="Salzberg S.L."/>
            <person name="White O."/>
            <person name="Venter J.C."/>
            <person name="Fraser C.M."/>
            <person name="Kaneko T."/>
            <person name="Nakamura Y."/>
            <person name="Sato S."/>
            <person name="Kato T."/>
            <person name="Asamizu E."/>
            <person name="Sasamoto S."/>
            <person name="Kimura T."/>
            <person name="Idesawa K."/>
            <person name="Kawashima K."/>
            <person name="Kishida Y."/>
            <person name="Kiyokawa C."/>
            <person name="Kohara M."/>
            <person name="Matsumoto M."/>
            <person name="Matsuno A."/>
            <person name="Muraki A."/>
            <person name="Nakayama S."/>
            <person name="Nakazaki N."/>
            <person name="Shinpo S."/>
            <person name="Takeuchi C."/>
            <person name="Wada T."/>
            <person name="Watanabe A."/>
            <person name="Yamada M."/>
            <person name="Yasuda M."/>
            <person name="Tabata S."/>
        </authorList>
    </citation>
    <scope>NUCLEOTIDE SEQUENCE [LARGE SCALE GENOMIC DNA]</scope>
    <source>
        <strain>cv. Columbia</strain>
    </source>
</reference>
<reference key="2">
    <citation type="journal article" date="2017" name="Plant J.">
        <title>Araport11: a complete reannotation of the Arabidopsis thaliana reference genome.</title>
        <authorList>
            <person name="Cheng C.Y."/>
            <person name="Krishnakumar V."/>
            <person name="Chan A.P."/>
            <person name="Thibaud-Nissen F."/>
            <person name="Schobel S."/>
            <person name="Town C.D."/>
        </authorList>
    </citation>
    <scope>GENOME REANNOTATION</scope>
    <source>
        <strain evidence="12">cv. Columbia</strain>
    </source>
</reference>
<reference key="3">
    <citation type="journal article" date="2003" name="Science">
        <title>Empirical analysis of transcriptional activity in the Arabidopsis genome.</title>
        <authorList>
            <person name="Yamada K."/>
            <person name="Lim J."/>
            <person name="Dale J.M."/>
            <person name="Chen H."/>
            <person name="Shinn P."/>
            <person name="Palm C.J."/>
            <person name="Southwick A.M."/>
            <person name="Wu H.C."/>
            <person name="Kim C.J."/>
            <person name="Nguyen M."/>
            <person name="Pham P.K."/>
            <person name="Cheuk R.F."/>
            <person name="Karlin-Newmann G."/>
            <person name="Liu S.X."/>
            <person name="Lam B."/>
            <person name="Sakano H."/>
            <person name="Wu T."/>
            <person name="Yu G."/>
            <person name="Miranda M."/>
            <person name="Quach H.L."/>
            <person name="Tripp M."/>
            <person name="Chang C.H."/>
            <person name="Lee J.M."/>
            <person name="Toriumi M.J."/>
            <person name="Chan M.M."/>
            <person name="Tang C.C."/>
            <person name="Onodera C.S."/>
            <person name="Deng J.M."/>
            <person name="Akiyama K."/>
            <person name="Ansari Y."/>
            <person name="Arakawa T."/>
            <person name="Banh J."/>
            <person name="Banno F."/>
            <person name="Bowser L."/>
            <person name="Brooks S.Y."/>
            <person name="Carninci P."/>
            <person name="Chao Q."/>
            <person name="Choy N."/>
            <person name="Enju A."/>
            <person name="Goldsmith A.D."/>
            <person name="Gurjal M."/>
            <person name="Hansen N.F."/>
            <person name="Hayashizaki Y."/>
            <person name="Johnson-Hopson C."/>
            <person name="Hsuan V.W."/>
            <person name="Iida K."/>
            <person name="Karnes M."/>
            <person name="Khan S."/>
            <person name="Koesema E."/>
            <person name="Ishida J."/>
            <person name="Jiang P.X."/>
            <person name="Jones T."/>
            <person name="Kawai J."/>
            <person name="Kamiya A."/>
            <person name="Meyers C."/>
            <person name="Nakajima M."/>
            <person name="Narusaka M."/>
            <person name="Seki M."/>
            <person name="Sakurai T."/>
            <person name="Satou M."/>
            <person name="Tamse R."/>
            <person name="Vaysberg M."/>
            <person name="Wallender E.K."/>
            <person name="Wong C."/>
            <person name="Yamamura Y."/>
            <person name="Yuan S."/>
            <person name="Shinozaki K."/>
            <person name="Davis R.W."/>
            <person name="Theologis A."/>
            <person name="Ecker J.R."/>
        </authorList>
    </citation>
    <scope>NUCLEOTIDE SEQUENCE [LARGE SCALE MRNA]</scope>
    <source>
        <strain>cv. Columbia</strain>
    </source>
</reference>
<reference key="4">
    <citation type="journal article" date="2001" name="Cell Stress Chaperones">
        <title>Arabidopsis thaliana type I and II chaperonins.</title>
        <authorList>
            <person name="Hill J.E."/>
            <person name="Hemmingsen S.M."/>
        </authorList>
    </citation>
    <scope>GENE FAMILY</scope>
    <scope>NOMENCLATURE</scope>
    <scope>SUBUNIT</scope>
</reference>
<reference key="5">
    <citation type="journal article" date="2011" name="Science">
        <title>Chaperonins facilitate KNOTTED1 cell-to-cell trafficking and stem cell function.</title>
        <authorList>
            <person name="Xu X.M."/>
            <person name="Wang J."/>
            <person name="Xuan Z."/>
            <person name="Goldshmidt A."/>
            <person name="Borrill P.G."/>
            <person name="Hariharan N."/>
            <person name="Kim J.Y."/>
            <person name="Jackson D."/>
        </authorList>
    </citation>
    <scope>FUNCTION</scope>
    <scope>MUTAGENESIS OF ALA-512</scope>
    <scope>DISRUPTION PHENOTYPE</scope>
    <scope>TISSUE SPECIFICITY</scope>
    <scope>INTERACTION WITH CCT3; KNAT1; STM AND TTG1</scope>
    <scope>SUBCELLULAR LOCATION</scope>
</reference>
<reference key="6">
    <citation type="journal article" date="2012" name="Plant Signal. Behav.">
        <title>The chaperonin CCT8 facilitates spread of tobamovirus infection.</title>
        <authorList>
            <person name="Fichtenbauer D."/>
            <person name="Xu X.M."/>
            <person name="Jackson D."/>
            <person name="Kragler F."/>
        </authorList>
    </citation>
    <scope>FUNCTION</scope>
</reference>
<protein>
    <recommendedName>
        <fullName evidence="3">T-complex protein 1 subunit theta</fullName>
        <shortName evidence="3">TCP-1-theta</shortName>
    </recommendedName>
    <alternativeName>
        <fullName evidence="3">CCT-theta</fullName>
    </alternativeName>
    <alternativeName>
        <fullName evidence="4">Chaperonin CCT8</fullName>
    </alternativeName>
    <alternativeName>
        <fullName evidence="4">Chaperonin containing TCP1 8</fullName>
    </alternativeName>
    <alternativeName>
        <fullName evidence="4">TCP1-ring complex</fullName>
    </alternativeName>
</protein>
<feature type="chain" id="PRO_0000431665" description="T-complex protein 1 subunit theta">
    <location>
        <begin position="1"/>
        <end position="549"/>
    </location>
</feature>
<feature type="mutagenesis site" description="In cct8-1; impaired KNAT1 trafficking." evidence="2">
    <original>A</original>
    <variation>V</variation>
    <location>
        <position position="512"/>
    </location>
</feature>
<gene>
    <name evidence="4" type="primary">CCT8</name>
    <name evidence="4" type="synonym">TRIC</name>
    <name evidence="9" type="ordered locus">At3g03960</name>
    <name evidence="10" type="ORF">T11I18.7</name>
</gene>
<comment type="function">
    <text evidence="2 8">Molecular chaperone; assists the folding of proteins upon ATP hydrolysis. Known to play a role, in vitro, in the folding of actin and tubulin. Contributes to stem cell maintenance through its impact on transcription factors trafficking through plasmodesmata (PubMed:21868675). Probably involved in refolding translocated, partially unfolded proteins, including viral movement proteins (PubMed:21868675, PubMed:22476462).</text>
</comment>
<comment type="subunit">
    <text evidence="2 6">Heterooligomeric complex of about 850 to 900 kDa that forms two stacked rings, 12 to 16 nm in diameter (PubMed:11599560). Interacts with CCT3, KNAT1, STM and TTG1 (PubMed:21868675).</text>
</comment>
<comment type="subcellular location">
    <subcellularLocation>
        <location evidence="2">Cytoplasm</location>
    </subcellularLocation>
</comment>
<comment type="tissue specificity">
    <text evidence="2">Expressed in shoot meristems, root tip, vasculature and leaf epidermis.</text>
</comment>
<comment type="disruption phenotype">
    <text evidence="7">Lethal.</text>
</comment>
<comment type="similarity">
    <text evidence="1">Belongs to the TCP-1 chaperonin family.</text>
</comment>
<comment type="sequence caution" evidence="5">
    <conflict type="erroneous gene model prediction">
        <sequence resource="EMBL-CDS" id="AAF05855"/>
    </conflict>
</comment>
<accession>Q94K05</accession>
<accession>Q9SQR6</accession>
<sequence>MVGMSMQPYGIQSMLKEGYRHLSGLDEAVIKNIEACKELSTITRTSLGPNGMNKMVINHLDKLFVTNDAATIVNELEIQHPAAKLLVLAAKAQQEEIGDGANLTISFAGELLQNAEELIRMGLHPSEIISGYTKAVSKAVEILEQLVETGSETMDVRNKDEVISRMRAAVASKQFGQEEIICSLVTDACIQVCPKNPTNFNVDNVRVSKLLGGGLHNSCIVRGMVLKSDAVGSIKRMEKAKVAVFAGGVDTTATETKGTVLIHSAEQLENYAKTEEAKVEELIKAVAESGAKVIVSGGSIGEMALHFCERYKIMVLKISSKFELRRFCRTAGAVAHLKLSRPSPEDLGYVDSISVEEIGGVTVTIARNEEGGNSISTVVLRGSTDSILDDLERAVDDGVNTYKAMCRDSRIVPGAAATEIELAQRLKEYANAEIGLDKYAITKYAESFEFVPKTLADNAGLNAMEIIAALYTGHGSGNTKLGIDLEEGACKDVSETKVWDLFATKLFALKYASDAACTVLRVDQIIMAKPAGGPRRDAAQAAGAGAEED</sequence>